<dbReference type="EC" id="1.3.1.48" evidence="2"/>
<dbReference type="EC" id="1.3.1.74" evidence="2"/>
<dbReference type="EMBL" id="BC102822">
    <property type="protein sequence ID" value="AAI02823.1"/>
    <property type="molecule type" value="mRNA"/>
</dbReference>
<dbReference type="RefSeq" id="NP_001030358.1">
    <property type="nucleotide sequence ID" value="NM_001035281.2"/>
</dbReference>
<dbReference type="SMR" id="Q3SZJ4"/>
<dbReference type="FunCoup" id="Q3SZJ4">
    <property type="interactions" value="561"/>
</dbReference>
<dbReference type="STRING" id="9913.ENSBTAP00000014649"/>
<dbReference type="PaxDb" id="9913-ENSBTAP00000014649"/>
<dbReference type="PeptideAtlas" id="Q3SZJ4"/>
<dbReference type="GeneID" id="513177"/>
<dbReference type="KEGG" id="bta:513177"/>
<dbReference type="CTD" id="22949"/>
<dbReference type="eggNOG" id="KOG1196">
    <property type="taxonomic scope" value="Eukaryota"/>
</dbReference>
<dbReference type="InParanoid" id="Q3SZJ4"/>
<dbReference type="OrthoDB" id="809632at2759"/>
<dbReference type="Proteomes" id="UP000009136">
    <property type="component" value="Unplaced"/>
</dbReference>
<dbReference type="GO" id="GO:0005737">
    <property type="term" value="C:cytoplasm"/>
    <property type="evidence" value="ECO:0000250"/>
    <property type="project" value="UniProtKB"/>
</dbReference>
<dbReference type="GO" id="GO:0036185">
    <property type="term" value="F:13-lipoxin reductase activity"/>
    <property type="evidence" value="ECO:0000250"/>
    <property type="project" value="UniProtKB"/>
</dbReference>
<dbReference type="GO" id="GO:0047522">
    <property type="term" value="F:15-oxoprostaglandin 13-oxidase [NAD(P)+] activity"/>
    <property type="evidence" value="ECO:0000250"/>
    <property type="project" value="UniProtKB"/>
</dbReference>
<dbReference type="GO" id="GO:0035798">
    <property type="term" value="F:2-alkenal reductase (NADPH) activity"/>
    <property type="evidence" value="ECO:0000250"/>
    <property type="project" value="UniProtKB"/>
</dbReference>
<dbReference type="GO" id="GO:0097257">
    <property type="term" value="F:leukotriene B4 12-hydroxy dehydrogenase activity"/>
    <property type="evidence" value="ECO:0000250"/>
    <property type="project" value="UniProtKB"/>
</dbReference>
<dbReference type="GO" id="GO:0036102">
    <property type="term" value="P:leukotriene B4 metabolic process"/>
    <property type="evidence" value="ECO:0000250"/>
    <property type="project" value="UniProtKB"/>
</dbReference>
<dbReference type="GO" id="GO:2001302">
    <property type="term" value="P:lipoxin A4 metabolic process"/>
    <property type="evidence" value="ECO:0000250"/>
    <property type="project" value="UniProtKB"/>
</dbReference>
<dbReference type="GO" id="GO:0006693">
    <property type="term" value="P:prostaglandin metabolic process"/>
    <property type="evidence" value="ECO:0000250"/>
    <property type="project" value="UniProtKB"/>
</dbReference>
<dbReference type="CDD" id="cd08294">
    <property type="entry name" value="leukotriene_B4_DH_like"/>
    <property type="match status" value="1"/>
</dbReference>
<dbReference type="FunFam" id="3.40.50.720:FF:000121">
    <property type="entry name" value="Prostaglandin reductase 2"/>
    <property type="match status" value="1"/>
</dbReference>
<dbReference type="Gene3D" id="3.90.180.10">
    <property type="entry name" value="Medium-chain alcohol dehydrogenases, catalytic domain"/>
    <property type="match status" value="1"/>
</dbReference>
<dbReference type="Gene3D" id="3.40.50.720">
    <property type="entry name" value="NAD(P)-binding Rossmann-like Domain"/>
    <property type="match status" value="1"/>
</dbReference>
<dbReference type="InterPro" id="IPR013149">
    <property type="entry name" value="ADH-like_C"/>
</dbReference>
<dbReference type="InterPro" id="IPR041694">
    <property type="entry name" value="ADH_N_2"/>
</dbReference>
<dbReference type="InterPro" id="IPR011032">
    <property type="entry name" value="GroES-like_sf"/>
</dbReference>
<dbReference type="InterPro" id="IPR045010">
    <property type="entry name" value="MDR_fam"/>
</dbReference>
<dbReference type="InterPro" id="IPR036291">
    <property type="entry name" value="NAD(P)-bd_dom_sf"/>
</dbReference>
<dbReference type="InterPro" id="IPR020843">
    <property type="entry name" value="PKS_ER"/>
</dbReference>
<dbReference type="InterPro" id="IPR014190">
    <property type="entry name" value="PTGR1"/>
</dbReference>
<dbReference type="NCBIfam" id="TIGR02825">
    <property type="entry name" value="B4_12hDH"/>
    <property type="match status" value="1"/>
</dbReference>
<dbReference type="PANTHER" id="PTHR43205">
    <property type="entry name" value="PROSTAGLANDIN REDUCTASE"/>
    <property type="match status" value="1"/>
</dbReference>
<dbReference type="PANTHER" id="PTHR43205:SF7">
    <property type="entry name" value="PROSTAGLANDIN REDUCTASE 1"/>
    <property type="match status" value="1"/>
</dbReference>
<dbReference type="Pfam" id="PF16884">
    <property type="entry name" value="ADH_N_2"/>
    <property type="match status" value="1"/>
</dbReference>
<dbReference type="Pfam" id="PF00107">
    <property type="entry name" value="ADH_zinc_N"/>
    <property type="match status" value="1"/>
</dbReference>
<dbReference type="SMART" id="SM00829">
    <property type="entry name" value="PKS_ER"/>
    <property type="match status" value="1"/>
</dbReference>
<dbReference type="SUPFAM" id="SSF50129">
    <property type="entry name" value="GroES-like"/>
    <property type="match status" value="2"/>
</dbReference>
<dbReference type="SUPFAM" id="SSF51735">
    <property type="entry name" value="NAD(P)-binding Rossmann-fold domains"/>
    <property type="match status" value="1"/>
</dbReference>
<name>PTGR1_BOVIN</name>
<feature type="chain" id="PRO_0000285790" description="Prostaglandin reductase 1">
    <location>
        <begin position="1"/>
        <end position="329"/>
    </location>
</feature>
<feature type="binding site" evidence="2">
    <location>
        <begin position="152"/>
        <end position="155"/>
    </location>
    <ligand>
        <name>NADP(+)</name>
        <dbReference type="ChEBI" id="CHEBI:58349"/>
    </ligand>
</feature>
<feature type="binding site" evidence="2">
    <location>
        <position position="178"/>
    </location>
    <ligand>
        <name>NADP(+)</name>
        <dbReference type="ChEBI" id="CHEBI:58349"/>
    </ligand>
</feature>
<feature type="binding site" evidence="2">
    <location>
        <position position="193"/>
    </location>
    <ligand>
        <name>NADP(+)</name>
        <dbReference type="ChEBI" id="CHEBI:58349"/>
    </ligand>
</feature>
<feature type="binding site" evidence="2">
    <location>
        <position position="217"/>
    </location>
    <ligand>
        <name>NADP(+)</name>
        <dbReference type="ChEBI" id="CHEBI:58349"/>
    </ligand>
</feature>
<feature type="binding site" evidence="2">
    <location>
        <begin position="239"/>
        <end position="245"/>
    </location>
    <ligand>
        <name>NADP(+)</name>
        <dbReference type="ChEBI" id="CHEBI:58349"/>
    </ligand>
</feature>
<feature type="binding site" evidence="2">
    <location>
        <begin position="270"/>
        <end position="272"/>
    </location>
    <ligand>
        <name>NADP(+)</name>
        <dbReference type="ChEBI" id="CHEBI:58349"/>
    </ligand>
</feature>
<feature type="binding site" evidence="2">
    <location>
        <position position="321"/>
    </location>
    <ligand>
        <name>NADP(+)</name>
        <dbReference type="ChEBI" id="CHEBI:58349"/>
    </ligand>
</feature>
<feature type="modified residue" description="Phosphothreonine" evidence="2">
    <location>
        <position position="18"/>
    </location>
</feature>
<feature type="modified residue" description="Phosphoserine" evidence="2">
    <location>
        <position position="20"/>
    </location>
</feature>
<feature type="modified residue" description="N6-(2-hydroxyisobutyryl)lysine; alternate" evidence="2">
    <location>
        <position position="178"/>
    </location>
</feature>
<feature type="modified residue" description="N6-acetyllysine; alternate" evidence="4">
    <location>
        <position position="178"/>
    </location>
</feature>
<keyword id="KW-0007">Acetylation</keyword>
<keyword id="KW-0963">Cytoplasm</keyword>
<keyword id="KW-0276">Fatty acid metabolism</keyword>
<keyword id="KW-0379">Hydroxylation</keyword>
<keyword id="KW-0443">Lipid metabolism</keyword>
<keyword id="KW-0521">NADP</keyword>
<keyword id="KW-0560">Oxidoreductase</keyword>
<keyword id="KW-0597">Phosphoprotein</keyword>
<keyword id="KW-0644">Prostaglandin metabolism</keyword>
<keyword id="KW-1185">Reference proteome</keyword>
<proteinExistence type="evidence at transcript level"/>
<reference key="1">
    <citation type="submission" date="2005-08" db="EMBL/GenBank/DDBJ databases">
        <authorList>
            <consortium name="NIH - Mammalian Gene Collection (MGC) project"/>
        </authorList>
    </citation>
    <scope>NUCLEOTIDE SEQUENCE [LARGE SCALE MRNA]</scope>
    <source>
        <strain>Crossbred X Angus</strain>
        <tissue>Ileum</tissue>
    </source>
</reference>
<protein>
    <recommendedName>
        <fullName>Prostaglandin reductase 1</fullName>
        <shortName>PRG-1</shortName>
    </recommendedName>
    <alternativeName>
        <fullName>15-oxoprostaglandin 13-reductase</fullName>
        <ecNumber evidence="2">1.3.1.48</ecNumber>
    </alternativeName>
    <alternativeName>
        <fullName evidence="1">Dithiolethione-inducible gene 1 protein</fullName>
        <shortName evidence="1">D3T-inducible gene 1 protein</shortName>
        <shortName evidence="1">DIG-1</shortName>
    </alternativeName>
    <alternativeName>
        <fullName evidence="2">Leukotriene B4 12-hydroxydehydrogenase</fullName>
    </alternativeName>
    <alternativeName>
        <fullName evidence="2">NAD(P)H-dependent alkenal/one oxidoreductase</fullName>
        <ecNumber evidence="2">1.3.1.74</ecNumber>
    </alternativeName>
</protein>
<comment type="function">
    <text evidence="1 2 3">NAD(P)H-dependent oxidoreductase involved in metabolic inactivation of pro- and anti-inflammatory eicosanoids: prostaglandins (PG), leukotrienes (LT) and lipoxins (LX). Catalyzes with high efficiency the reduction of the 13,14 double bond of 15-oxoPGs, including 15-oxo-PGE1, 15-oxo-PGE2, 15-oxo-PGF1-alpha and 15-oxo-PGF2-alpha (By similarity). Catalyzes with lower efficiency the oxidation of the hydroxyl group at C12 of LTB4 and its derivatives, converting them into biologically less active 12-oxo-LTB4 metabolites (By similarity). Reduces 15-oxo-LXA4 to 13,14 dihydro-15-oxo-LXA4, enhancing neutrophil recruitment at the inflammatory site (By similarity). Plays a role in metabolic detoxification of alkenals and ketones. Reduces alpha,beta-unsaturated alkenals and ketones, particularly those with medium-chain length, showing highest affinity toward (2E)-decenal and (3E)-3-nonen-2-one (By similarity). May inactivate 4-hydroxy-2-nonenal, a cytotoxic lipid constituent of oxidized low-density lipoprotein particles (By similarity).</text>
</comment>
<comment type="catalytic activity">
    <reaction evidence="2">
        <text>13,14-dihydro-15-oxo-prostaglandin E1 + NADP(+) = 15-oxoprostaglandin E1 + NADPH + H(+)</text>
        <dbReference type="Rhea" id="RHEA:50584"/>
        <dbReference type="ChEBI" id="CHEBI:15378"/>
        <dbReference type="ChEBI" id="CHEBI:57401"/>
        <dbReference type="ChEBI" id="CHEBI:57783"/>
        <dbReference type="ChEBI" id="CHEBI:58349"/>
        <dbReference type="ChEBI" id="CHEBI:133408"/>
    </reaction>
    <physiologicalReaction direction="right-to-left" evidence="2">
        <dbReference type="Rhea" id="RHEA:50586"/>
    </physiologicalReaction>
</comment>
<comment type="catalytic activity">
    <reaction evidence="2">
        <text>13,14-dihydro-15-oxo-prostaglandin E2 + NADP(+) = 15-oxoprostaglandin E2 + NADPH + H(+)</text>
        <dbReference type="Rhea" id="RHEA:11912"/>
        <dbReference type="ChEBI" id="CHEBI:15378"/>
        <dbReference type="ChEBI" id="CHEBI:57400"/>
        <dbReference type="ChEBI" id="CHEBI:57402"/>
        <dbReference type="ChEBI" id="CHEBI:57783"/>
        <dbReference type="ChEBI" id="CHEBI:58349"/>
        <dbReference type="EC" id="1.3.1.48"/>
    </reaction>
    <physiologicalReaction direction="right-to-left" evidence="2">
        <dbReference type="Rhea" id="RHEA:11914"/>
    </physiologicalReaction>
</comment>
<comment type="catalytic activity">
    <reaction evidence="2">
        <text>13,14-dihydro-15-oxo-prostaglandin F1alpha + NADP(+) = 15-oxoprostaglandin F1alpha + NADPH + H(+)</text>
        <dbReference type="Rhea" id="RHEA:50592"/>
        <dbReference type="ChEBI" id="CHEBI:15378"/>
        <dbReference type="ChEBI" id="CHEBI:57783"/>
        <dbReference type="ChEBI" id="CHEBI:58349"/>
        <dbReference type="ChEBI" id="CHEBI:79072"/>
        <dbReference type="ChEBI" id="CHEBI:133411"/>
    </reaction>
    <physiologicalReaction direction="right-to-left" evidence="2">
        <dbReference type="Rhea" id="RHEA:50594"/>
    </physiologicalReaction>
</comment>
<comment type="catalytic activity">
    <reaction evidence="2">
        <text>13,14-dihydro-15-oxo-PGF2alpha + NADP(+) = 15-oxoprostaglandin F2alpha + NADPH + H(+)</text>
        <dbReference type="Rhea" id="RHEA:50588"/>
        <dbReference type="ChEBI" id="CHEBI:15378"/>
        <dbReference type="ChEBI" id="CHEBI:57783"/>
        <dbReference type="ChEBI" id="CHEBI:58349"/>
        <dbReference type="ChEBI" id="CHEBI:133374"/>
        <dbReference type="ChEBI" id="CHEBI:133409"/>
    </reaction>
    <physiologicalReaction direction="right-to-left" evidence="2">
        <dbReference type="Rhea" id="RHEA:50590"/>
    </physiologicalReaction>
</comment>
<comment type="catalytic activity">
    <reaction evidence="3 5">
        <text>leukotriene B4 + NADP(+) = 12-oxo-leukotriene B4 + NADPH + H(+)</text>
        <dbReference type="Rhea" id="RHEA:50608"/>
        <dbReference type="ChEBI" id="CHEBI:15378"/>
        <dbReference type="ChEBI" id="CHEBI:57461"/>
        <dbReference type="ChEBI" id="CHEBI:57783"/>
        <dbReference type="ChEBI" id="CHEBI:58349"/>
        <dbReference type="ChEBI" id="CHEBI:133309"/>
    </reaction>
    <physiologicalReaction direction="left-to-right" evidence="3 5">
        <dbReference type="Rhea" id="RHEA:50609"/>
    </physiologicalReaction>
</comment>
<comment type="catalytic activity">
    <reaction evidence="3">
        <text>20-hydroxy-leukotriene B4 + NADP(+) = 12-oxo-20-hydroxy-leukotriene B4 + NADPH + H(+)</text>
        <dbReference type="Rhea" id="RHEA:51208"/>
        <dbReference type="ChEBI" id="CHEBI:15378"/>
        <dbReference type="ChEBI" id="CHEBI:57460"/>
        <dbReference type="ChEBI" id="CHEBI:57783"/>
        <dbReference type="ChEBI" id="CHEBI:58349"/>
        <dbReference type="ChEBI" id="CHEBI:133346"/>
    </reaction>
    <physiologicalReaction direction="left-to-right" evidence="3">
        <dbReference type="Rhea" id="RHEA:51209"/>
    </physiologicalReaction>
</comment>
<comment type="catalytic activity">
    <reaction evidence="3">
        <text>6-trans-leukotriene B4 + NADP(+) = 12-oxo-(5S)-hydroxy-(6E,8E,10E,14Z)-eicosatetraenoate + NADPH + H(+)</text>
        <dbReference type="Rhea" id="RHEA:51204"/>
        <dbReference type="ChEBI" id="CHEBI:15378"/>
        <dbReference type="ChEBI" id="CHEBI:57783"/>
        <dbReference type="ChEBI" id="CHEBI:58349"/>
        <dbReference type="ChEBI" id="CHEBI:90723"/>
        <dbReference type="ChEBI" id="CHEBI:133974"/>
    </reaction>
    <physiologicalReaction direction="left-to-right" evidence="3">
        <dbReference type="Rhea" id="RHEA:51205"/>
    </physiologicalReaction>
</comment>
<comment type="catalytic activity">
    <reaction evidence="3">
        <text>(5S,12S)-dihydroxy-(6E,10E,12E,14Z)-eicosatetraenoate + NADP(+) = 12-oxo-(5S)-hydroxy-(6E,8E,10E,14Z)-eicosatetraenoate + NADPH + H(+)</text>
        <dbReference type="Rhea" id="RHEA:51212"/>
        <dbReference type="ChEBI" id="CHEBI:15378"/>
        <dbReference type="ChEBI" id="CHEBI:57783"/>
        <dbReference type="ChEBI" id="CHEBI:58349"/>
        <dbReference type="ChEBI" id="CHEBI:133974"/>
        <dbReference type="ChEBI" id="CHEBI:133975"/>
    </reaction>
    <physiologicalReaction direction="left-to-right" evidence="3">
        <dbReference type="Rhea" id="RHEA:51213"/>
    </physiologicalReaction>
</comment>
<comment type="catalytic activity">
    <reaction evidence="2">
        <text>an n-alkanal + NADP(+) = an alk-2-enal + NADPH + H(+)</text>
        <dbReference type="Rhea" id="RHEA:13737"/>
        <dbReference type="ChEBI" id="CHEBI:12834"/>
        <dbReference type="ChEBI" id="CHEBI:13757"/>
        <dbReference type="ChEBI" id="CHEBI:15378"/>
        <dbReference type="ChEBI" id="CHEBI:57783"/>
        <dbReference type="ChEBI" id="CHEBI:58349"/>
        <dbReference type="EC" id="1.3.1.74"/>
    </reaction>
    <physiologicalReaction direction="right-to-left" evidence="2">
        <dbReference type="Rhea" id="RHEA:13739"/>
    </physiologicalReaction>
</comment>
<comment type="catalytic activity">
    <reaction evidence="2">
        <text>hexanal + NADP(+) = (E)-hex-2-enal + NADPH + H(+)</text>
        <dbReference type="Rhea" id="RHEA:50776"/>
        <dbReference type="ChEBI" id="CHEBI:15378"/>
        <dbReference type="ChEBI" id="CHEBI:28913"/>
        <dbReference type="ChEBI" id="CHEBI:57783"/>
        <dbReference type="ChEBI" id="CHEBI:58349"/>
        <dbReference type="ChEBI" id="CHEBI:88528"/>
    </reaction>
    <physiologicalReaction direction="right-to-left" evidence="2">
        <dbReference type="Rhea" id="RHEA:50778"/>
    </physiologicalReaction>
</comment>
<comment type="catalytic activity">
    <reaction evidence="2">
        <text>octanal + NADP(+) = (2E)-octenal + NADPH + H(+)</text>
        <dbReference type="Rhea" id="RHEA:50780"/>
        <dbReference type="ChEBI" id="CHEBI:15378"/>
        <dbReference type="ChEBI" id="CHEBI:17935"/>
        <dbReference type="ChEBI" id="CHEBI:57783"/>
        <dbReference type="ChEBI" id="CHEBI:58349"/>
        <dbReference type="ChEBI" id="CHEBI:61748"/>
    </reaction>
    <physiologicalReaction direction="right-to-left" evidence="2">
        <dbReference type="Rhea" id="RHEA:50782"/>
    </physiologicalReaction>
</comment>
<comment type="catalytic activity">
    <reaction evidence="2">
        <text>decanal + NADP(+) = (2E)-decenal + NADPH + H(+)</text>
        <dbReference type="Rhea" id="RHEA:50612"/>
        <dbReference type="ChEBI" id="CHEBI:15378"/>
        <dbReference type="ChEBI" id="CHEBI:31457"/>
        <dbReference type="ChEBI" id="CHEBI:57783"/>
        <dbReference type="ChEBI" id="CHEBI:58349"/>
        <dbReference type="ChEBI" id="CHEBI:133455"/>
    </reaction>
    <physiologicalReaction direction="right-to-left" evidence="2">
        <dbReference type="Rhea" id="RHEA:50614"/>
    </physiologicalReaction>
</comment>
<comment type="catalytic activity">
    <reaction evidence="2">
        <text>dodecanal + NADP(+) = (2E)-dodecenal + NADPH + H(+)</text>
        <dbReference type="Rhea" id="RHEA:50784"/>
        <dbReference type="ChEBI" id="CHEBI:15378"/>
        <dbReference type="ChEBI" id="CHEBI:27836"/>
        <dbReference type="ChEBI" id="CHEBI:57783"/>
        <dbReference type="ChEBI" id="CHEBI:58349"/>
        <dbReference type="ChEBI" id="CHEBI:133741"/>
    </reaction>
    <physiologicalReaction direction="right-to-left" evidence="2">
        <dbReference type="Rhea" id="RHEA:50786"/>
    </physiologicalReaction>
</comment>
<comment type="catalytic activity">
    <reaction evidence="1">
        <text>4-hydroxynonanal + NADP(+) = (E)-4-hydroxynon-2-enal + NADPH + H(+)</text>
        <dbReference type="Rhea" id="RHEA:64736"/>
        <dbReference type="ChEBI" id="CHEBI:15378"/>
        <dbReference type="ChEBI" id="CHEBI:57783"/>
        <dbReference type="ChEBI" id="CHEBI:58349"/>
        <dbReference type="ChEBI" id="CHEBI:58968"/>
        <dbReference type="ChEBI" id="CHEBI:156112"/>
    </reaction>
    <physiologicalReaction direction="right-to-left" evidence="1">
        <dbReference type="Rhea" id="RHEA:64738"/>
    </physiologicalReaction>
</comment>
<comment type="catalytic activity">
    <reaction evidence="2">
        <text>pentan-2-one + NADP(+) = (E)-pent-3-en-2-one + NADPH + H(+)</text>
        <dbReference type="Rhea" id="RHEA:50788"/>
        <dbReference type="ChEBI" id="CHEBI:15378"/>
        <dbReference type="ChEBI" id="CHEBI:16472"/>
        <dbReference type="ChEBI" id="CHEBI:57783"/>
        <dbReference type="ChEBI" id="CHEBI:58349"/>
        <dbReference type="ChEBI" id="CHEBI:145276"/>
    </reaction>
    <physiologicalReaction direction="right-to-left" evidence="2">
        <dbReference type="Rhea" id="RHEA:50790"/>
    </physiologicalReaction>
</comment>
<comment type="catalytic activity">
    <reaction evidence="2">
        <text>nonan-2-one + NADP(+) = (3E)-nonen-2-one + NADPH + H(+)</text>
        <dbReference type="Rhea" id="RHEA:50616"/>
        <dbReference type="ChEBI" id="CHEBI:15378"/>
        <dbReference type="ChEBI" id="CHEBI:57783"/>
        <dbReference type="ChEBI" id="CHEBI:58349"/>
        <dbReference type="ChEBI" id="CHEBI:77927"/>
        <dbReference type="ChEBI" id="CHEBI:133457"/>
    </reaction>
    <physiologicalReaction direction="right-to-left" evidence="2">
        <dbReference type="Rhea" id="RHEA:50618"/>
    </physiologicalReaction>
</comment>
<comment type="subunit">
    <text evidence="5">Monomer or homodimer.</text>
</comment>
<comment type="subcellular location">
    <subcellularLocation>
        <location evidence="3">Cytoplasm</location>
    </subcellularLocation>
</comment>
<comment type="similarity">
    <text evidence="6">Belongs to the NADP-dependent oxidoreductase L4BD family.</text>
</comment>
<accession>Q3SZJ4</accession>
<organism>
    <name type="scientific">Bos taurus</name>
    <name type="common">Bovine</name>
    <dbReference type="NCBI Taxonomy" id="9913"/>
    <lineage>
        <taxon>Eukaryota</taxon>
        <taxon>Metazoa</taxon>
        <taxon>Chordata</taxon>
        <taxon>Craniata</taxon>
        <taxon>Vertebrata</taxon>
        <taxon>Euteleostomi</taxon>
        <taxon>Mammalia</taxon>
        <taxon>Eutheria</taxon>
        <taxon>Laurasiatheria</taxon>
        <taxon>Artiodactyla</taxon>
        <taxon>Ruminantia</taxon>
        <taxon>Pecora</taxon>
        <taxon>Bovidae</taxon>
        <taxon>Bovinae</taxon>
        <taxon>Bos</taxon>
    </lineage>
</organism>
<sequence>MVHAKSWTLKKHFVGYPTNSDFELKTVELPPLKDGEVLLEALYLTVDPYMRIMAKSLKEGDMMMGEQVARVVESKNSAFPTGTIVLAPSGWTTHSISNGEKLEKVLAEWPDTLPLSLALGTVGMPGLTAYFGLLDICGVKGGETVLVSAAAGAVGSIVGQIAKLKGCKVVGTAGSDEKVAWLKKHGFDVALNYKTVKSLEEALKEAAPEGYDCYFDNVGGEFSNVAITQMKKFGRIAICGAISVYNRTSPLSPGPSPEIIIFKELHLQGFVVYRWQGEVRQKALRDLLKWVSEGKIQYHEHVTEGFENMPAAFIGLLKGENLGKAIVKA</sequence>
<gene>
    <name type="primary">PTGR1</name>
    <name type="synonym">LTB4DH</name>
</gene>
<evidence type="ECO:0000250" key="1">
    <source>
        <dbReference type="UniProtKB" id="P97584"/>
    </source>
</evidence>
<evidence type="ECO:0000250" key="2">
    <source>
        <dbReference type="UniProtKB" id="Q14914"/>
    </source>
</evidence>
<evidence type="ECO:0000250" key="3">
    <source>
        <dbReference type="UniProtKB" id="Q29073"/>
    </source>
</evidence>
<evidence type="ECO:0000250" key="4">
    <source>
        <dbReference type="UniProtKB" id="Q91YR9"/>
    </source>
</evidence>
<evidence type="ECO:0000250" key="5">
    <source>
        <dbReference type="UniProtKB" id="Q9EQZ5"/>
    </source>
</evidence>
<evidence type="ECO:0000305" key="6"/>